<feature type="chain" id="PRO_0000370541" description="tRNA (guanine-N(7)-)-methyltransferase non-catalytic subunit wuho">
    <location>
        <begin position="1"/>
        <end position="401"/>
    </location>
</feature>
<feature type="repeat" description="WD 1">
    <location>
        <begin position="86"/>
        <end position="125"/>
    </location>
</feature>
<feature type="repeat" description="WD 2">
    <location>
        <begin position="174"/>
        <end position="213"/>
    </location>
</feature>
<feature type="repeat" description="WD 3">
    <location>
        <begin position="217"/>
        <end position="255"/>
    </location>
</feature>
<feature type="region of interest" description="Disordered" evidence="2">
    <location>
        <begin position="45"/>
        <end position="85"/>
    </location>
</feature>
<feature type="compositionally biased region" description="Acidic residues" evidence="2">
    <location>
        <begin position="54"/>
        <end position="64"/>
    </location>
</feature>
<dbReference type="EMBL" id="DS231859">
    <property type="protein sequence ID" value="EDS39075.1"/>
    <property type="molecule type" value="Genomic_DNA"/>
</dbReference>
<dbReference type="RefSeq" id="XP_001845059.1">
    <property type="nucleotide sequence ID" value="XM_001845007.1"/>
</dbReference>
<dbReference type="SMR" id="B0W8M5"/>
<dbReference type="FunCoup" id="B0W8M5">
    <property type="interactions" value="653"/>
</dbReference>
<dbReference type="STRING" id="7176.B0W8M5"/>
<dbReference type="EnsemblMetazoa" id="CPIJ003333-RA">
    <property type="protein sequence ID" value="CPIJ003333-PA"/>
    <property type="gene ID" value="CPIJ003333"/>
</dbReference>
<dbReference type="GeneID" id="6034786"/>
<dbReference type="KEGG" id="cqu:CpipJ_CPIJ003333"/>
<dbReference type="CTD" id="31566"/>
<dbReference type="VEuPathDB" id="VectorBase:CPIJ003333"/>
<dbReference type="VEuPathDB" id="VectorBase:CQUJHB004058"/>
<dbReference type="eggNOG" id="KOG3914">
    <property type="taxonomic scope" value="Eukaryota"/>
</dbReference>
<dbReference type="HOGENOM" id="CLU_054270_0_0_1"/>
<dbReference type="InParanoid" id="B0W8M5"/>
<dbReference type="OrthoDB" id="371245at2759"/>
<dbReference type="PhylomeDB" id="B0W8M5"/>
<dbReference type="UniPathway" id="UPA00989"/>
<dbReference type="Proteomes" id="UP000002320">
    <property type="component" value="Unassembled WGS sequence"/>
</dbReference>
<dbReference type="GO" id="GO:0005829">
    <property type="term" value="C:cytosol"/>
    <property type="evidence" value="ECO:0007669"/>
    <property type="project" value="TreeGrafter"/>
</dbReference>
<dbReference type="GO" id="GO:0005634">
    <property type="term" value="C:nucleus"/>
    <property type="evidence" value="ECO:0007669"/>
    <property type="project" value="UniProtKB-SubCell"/>
</dbReference>
<dbReference type="GO" id="GO:0043527">
    <property type="term" value="C:tRNA methyltransferase complex"/>
    <property type="evidence" value="ECO:0007669"/>
    <property type="project" value="TreeGrafter"/>
</dbReference>
<dbReference type="GO" id="GO:0106004">
    <property type="term" value="P:tRNA (guanine-N7)-methylation"/>
    <property type="evidence" value="ECO:0007669"/>
    <property type="project" value="UniProtKB-UniRule"/>
</dbReference>
<dbReference type="Gene3D" id="2.130.10.10">
    <property type="entry name" value="YVTN repeat-like/Quinoprotein amine dehydrogenase"/>
    <property type="match status" value="1"/>
</dbReference>
<dbReference type="HAMAP" id="MF_03056">
    <property type="entry name" value="TRM82"/>
    <property type="match status" value="1"/>
</dbReference>
<dbReference type="InterPro" id="IPR028884">
    <property type="entry name" value="Trm82"/>
</dbReference>
<dbReference type="InterPro" id="IPR015943">
    <property type="entry name" value="WD40/YVTN_repeat-like_dom_sf"/>
</dbReference>
<dbReference type="InterPro" id="IPR036322">
    <property type="entry name" value="WD40_repeat_dom_sf"/>
</dbReference>
<dbReference type="InterPro" id="IPR001680">
    <property type="entry name" value="WD40_rpt"/>
</dbReference>
<dbReference type="PANTHER" id="PTHR16288:SF0">
    <property type="entry name" value="TRNA (GUANINE-N(7)-)-METHYLTRANSFERASE NON-CATALYTIC SUBUNIT WDR4"/>
    <property type="match status" value="1"/>
</dbReference>
<dbReference type="PANTHER" id="PTHR16288">
    <property type="entry name" value="WD40 REPEAT PROTEIN 4"/>
    <property type="match status" value="1"/>
</dbReference>
<dbReference type="SMART" id="SM00320">
    <property type="entry name" value="WD40"/>
    <property type="match status" value="3"/>
</dbReference>
<dbReference type="SUPFAM" id="SSF50978">
    <property type="entry name" value="WD40 repeat-like"/>
    <property type="match status" value="1"/>
</dbReference>
<dbReference type="PROSITE" id="PS50082">
    <property type="entry name" value="WD_REPEATS_2"/>
    <property type="match status" value="1"/>
</dbReference>
<dbReference type="PROSITE" id="PS50294">
    <property type="entry name" value="WD_REPEATS_REGION"/>
    <property type="match status" value="1"/>
</dbReference>
<evidence type="ECO:0000255" key="1">
    <source>
        <dbReference type="HAMAP-Rule" id="MF_03056"/>
    </source>
</evidence>
<evidence type="ECO:0000256" key="2">
    <source>
        <dbReference type="SAM" id="MobiDB-lite"/>
    </source>
</evidence>
<keyword id="KW-0539">Nucleus</keyword>
<keyword id="KW-1185">Reference proteome</keyword>
<keyword id="KW-0677">Repeat</keyword>
<keyword id="KW-0819">tRNA processing</keyword>
<keyword id="KW-0853">WD repeat</keyword>
<accession>B0W8M5</accession>
<reference key="1">
    <citation type="submission" date="2007-03" db="EMBL/GenBank/DDBJ databases">
        <title>Annotation of Culex pipiens quinquefasciatus.</title>
        <authorList>
            <consortium name="The Broad Institute Genome Sequencing Platform"/>
            <person name="Atkinson P.W."/>
            <person name="Hemingway J."/>
            <person name="Christensen B.M."/>
            <person name="Higgs S."/>
            <person name="Kodira C.D."/>
            <person name="Hannick L.I."/>
            <person name="Megy K."/>
            <person name="O'Leary S.B."/>
            <person name="Pearson M."/>
            <person name="Haas B.J."/>
            <person name="Mauceli E."/>
            <person name="Wortman J.R."/>
            <person name="Lee N.H."/>
            <person name="Guigo R."/>
            <person name="Stanke M."/>
            <person name="Alvarado L."/>
            <person name="Amedeo P."/>
            <person name="Antoine C.H."/>
            <person name="Arensburger P."/>
            <person name="Bidwell S.L."/>
            <person name="Crawford M."/>
            <person name="Camaro F."/>
            <person name="Devon K."/>
            <person name="Engels R."/>
            <person name="Hammond M."/>
            <person name="Howarth C."/>
            <person name="Koehrsen M."/>
            <person name="Lawson D."/>
            <person name="Montgomery P."/>
            <person name="Nene V."/>
            <person name="Nusbaum C."/>
            <person name="Puiu D."/>
            <person name="Romero-Severson J."/>
            <person name="Severson D.W."/>
            <person name="Shumway M."/>
            <person name="Sisk P."/>
            <person name="Stolte C."/>
            <person name="Zeng Q."/>
            <person name="Eisenstadt E."/>
            <person name="Fraser-Liggett C.M."/>
            <person name="Strausberg R."/>
            <person name="Galagan J."/>
            <person name="Birren B."/>
            <person name="Collins F.H."/>
        </authorList>
    </citation>
    <scope>NUCLEOTIDE SEQUENCE [LARGE SCALE GENOMIC DNA]</scope>
    <source>
        <strain>JHB</strain>
    </source>
</reference>
<sequence>MSSFIKRFRKSTLVAFNRTVHFLQDDYSVWSYEIDADKESVPFEKGRPRKYFDADSDSDEEQQNGDEPGTGKNNGGGDTGKKDQDDQTNAIVALDVNEDRSLVAVATGDKSLYLFEVDQDGRTLKVLSRRLLSRASSCVKFAAGGRFAIVCDKGGDCYKYDCEEYRKPGRWLLGHMSQVLDVLIDTEEKLIITSDRDEKIRVTCHPDCHNIETFCLGHTEFVSHLEFLGPELLLSLSGDKTLRWWNYTSGKELARKELELPGNKLALQKLAADGTGLLAVLCYKPTAVNVFKLSGTTGCEFVQALNLKSGQVFSTIAFDESGNLLGFVIEESTGAPSLAKYEFDRENFKLAKEAAFIKSFDDSKLPYVDSVSFLFKKKFDNIKDYQERKRKRIEENNKQLG</sequence>
<protein>
    <recommendedName>
        <fullName evidence="1">tRNA (guanine-N(7)-)-methyltransferase non-catalytic subunit wuho</fullName>
    </recommendedName>
</protein>
<proteinExistence type="inferred from homology"/>
<gene>
    <name evidence="1" type="primary">wuho</name>
    <name type="ORF">CPIJ003333</name>
</gene>
<organism>
    <name type="scientific">Culex quinquefasciatus</name>
    <name type="common">Southern house mosquito</name>
    <name type="synonym">Culex pungens</name>
    <dbReference type="NCBI Taxonomy" id="7176"/>
    <lineage>
        <taxon>Eukaryota</taxon>
        <taxon>Metazoa</taxon>
        <taxon>Ecdysozoa</taxon>
        <taxon>Arthropoda</taxon>
        <taxon>Hexapoda</taxon>
        <taxon>Insecta</taxon>
        <taxon>Pterygota</taxon>
        <taxon>Neoptera</taxon>
        <taxon>Endopterygota</taxon>
        <taxon>Diptera</taxon>
        <taxon>Nematocera</taxon>
        <taxon>Culicoidea</taxon>
        <taxon>Culicidae</taxon>
        <taxon>Culicinae</taxon>
        <taxon>Culicini</taxon>
        <taxon>Culex</taxon>
        <taxon>Culex</taxon>
    </lineage>
</organism>
<comment type="function">
    <text evidence="1">Required for the formation of N(7)-methylguanine at position 46 (m7G46) in tRNA. In the complex, it is required to stabilize and induce conformational changes of the catalytic subunit.</text>
</comment>
<comment type="pathway">
    <text evidence="1">tRNA modification; N(7)-methylguanine-tRNA biosynthesis.</text>
</comment>
<comment type="subunit">
    <text evidence="1">Forms a heterodimer with the catalytic subunit.</text>
</comment>
<comment type="subcellular location">
    <subcellularLocation>
        <location evidence="1">Nucleus</location>
    </subcellularLocation>
</comment>
<comment type="similarity">
    <text evidence="1">Belongs to the WD repeat TRM82 family.</text>
</comment>
<name>WUHO_CULQU</name>